<proteinExistence type="inferred from homology"/>
<dbReference type="EC" id="2.1.3.2" evidence="1"/>
<dbReference type="EMBL" id="BX548174">
    <property type="protein sequence ID" value="CAE18692.1"/>
    <property type="molecule type" value="Genomic_DNA"/>
</dbReference>
<dbReference type="RefSeq" id="WP_011131872.1">
    <property type="nucleotide sequence ID" value="NC_005072.1"/>
</dbReference>
<dbReference type="SMR" id="Q7V355"/>
<dbReference type="STRING" id="59919.PMM0233"/>
<dbReference type="KEGG" id="pmm:PMM0233"/>
<dbReference type="eggNOG" id="COG0540">
    <property type="taxonomic scope" value="Bacteria"/>
</dbReference>
<dbReference type="HOGENOM" id="CLU_043846_2_0_3"/>
<dbReference type="OrthoDB" id="9774690at2"/>
<dbReference type="UniPathway" id="UPA00070">
    <property type="reaction ID" value="UER00116"/>
</dbReference>
<dbReference type="Proteomes" id="UP000001026">
    <property type="component" value="Chromosome"/>
</dbReference>
<dbReference type="GO" id="GO:0005829">
    <property type="term" value="C:cytosol"/>
    <property type="evidence" value="ECO:0007669"/>
    <property type="project" value="TreeGrafter"/>
</dbReference>
<dbReference type="GO" id="GO:0016597">
    <property type="term" value="F:amino acid binding"/>
    <property type="evidence" value="ECO:0007669"/>
    <property type="project" value="InterPro"/>
</dbReference>
<dbReference type="GO" id="GO:0004070">
    <property type="term" value="F:aspartate carbamoyltransferase activity"/>
    <property type="evidence" value="ECO:0007669"/>
    <property type="project" value="UniProtKB-UniRule"/>
</dbReference>
<dbReference type="GO" id="GO:0006207">
    <property type="term" value="P:'de novo' pyrimidine nucleobase biosynthetic process"/>
    <property type="evidence" value="ECO:0007669"/>
    <property type="project" value="InterPro"/>
</dbReference>
<dbReference type="GO" id="GO:0044205">
    <property type="term" value="P:'de novo' UMP biosynthetic process"/>
    <property type="evidence" value="ECO:0007669"/>
    <property type="project" value="UniProtKB-UniRule"/>
</dbReference>
<dbReference type="GO" id="GO:0006520">
    <property type="term" value="P:amino acid metabolic process"/>
    <property type="evidence" value="ECO:0007669"/>
    <property type="project" value="InterPro"/>
</dbReference>
<dbReference type="Gene3D" id="3.40.50.1370">
    <property type="entry name" value="Aspartate/ornithine carbamoyltransferase"/>
    <property type="match status" value="2"/>
</dbReference>
<dbReference type="HAMAP" id="MF_00001">
    <property type="entry name" value="Asp_carb_tr"/>
    <property type="match status" value="1"/>
</dbReference>
<dbReference type="InterPro" id="IPR006132">
    <property type="entry name" value="Asp/Orn_carbamoyltranf_P-bd"/>
</dbReference>
<dbReference type="InterPro" id="IPR006130">
    <property type="entry name" value="Asp/Orn_carbamoylTrfase"/>
</dbReference>
<dbReference type="InterPro" id="IPR036901">
    <property type="entry name" value="Asp/Orn_carbamoylTrfase_sf"/>
</dbReference>
<dbReference type="InterPro" id="IPR002082">
    <property type="entry name" value="Asp_carbamoyltransf"/>
</dbReference>
<dbReference type="InterPro" id="IPR006131">
    <property type="entry name" value="Asp_carbamoyltransf_Asp/Orn-bd"/>
</dbReference>
<dbReference type="NCBIfam" id="TIGR00670">
    <property type="entry name" value="asp_carb_tr"/>
    <property type="match status" value="1"/>
</dbReference>
<dbReference type="NCBIfam" id="NF002032">
    <property type="entry name" value="PRK00856.1"/>
    <property type="match status" value="1"/>
</dbReference>
<dbReference type="PANTHER" id="PTHR45753:SF6">
    <property type="entry name" value="ASPARTATE CARBAMOYLTRANSFERASE"/>
    <property type="match status" value="1"/>
</dbReference>
<dbReference type="PANTHER" id="PTHR45753">
    <property type="entry name" value="ORNITHINE CARBAMOYLTRANSFERASE, MITOCHONDRIAL"/>
    <property type="match status" value="1"/>
</dbReference>
<dbReference type="Pfam" id="PF00185">
    <property type="entry name" value="OTCace"/>
    <property type="match status" value="1"/>
</dbReference>
<dbReference type="Pfam" id="PF02729">
    <property type="entry name" value="OTCace_N"/>
    <property type="match status" value="1"/>
</dbReference>
<dbReference type="PRINTS" id="PR00100">
    <property type="entry name" value="AOTCASE"/>
</dbReference>
<dbReference type="PRINTS" id="PR00101">
    <property type="entry name" value="ATCASE"/>
</dbReference>
<dbReference type="SUPFAM" id="SSF53671">
    <property type="entry name" value="Aspartate/ornithine carbamoyltransferase"/>
    <property type="match status" value="1"/>
</dbReference>
<dbReference type="PROSITE" id="PS00097">
    <property type="entry name" value="CARBAMOYLTRANSFERASE"/>
    <property type="match status" value="1"/>
</dbReference>
<accession>Q7V355</accession>
<gene>
    <name evidence="1" type="primary">pyrB</name>
    <name type="ordered locus">PMM0233</name>
</gene>
<feature type="chain" id="PRO_0000113175" description="Aspartate carbamoyltransferase catalytic subunit">
    <location>
        <begin position="1"/>
        <end position="338"/>
    </location>
</feature>
<feature type="binding site" evidence="1">
    <location>
        <position position="59"/>
    </location>
    <ligand>
        <name>carbamoyl phosphate</name>
        <dbReference type="ChEBI" id="CHEBI:58228"/>
    </ligand>
</feature>
<feature type="binding site" evidence="1">
    <location>
        <position position="60"/>
    </location>
    <ligand>
        <name>carbamoyl phosphate</name>
        <dbReference type="ChEBI" id="CHEBI:58228"/>
    </ligand>
</feature>
<feature type="binding site" evidence="1">
    <location>
        <position position="87"/>
    </location>
    <ligand>
        <name>L-aspartate</name>
        <dbReference type="ChEBI" id="CHEBI:29991"/>
    </ligand>
</feature>
<feature type="binding site" evidence="1">
    <location>
        <position position="109"/>
    </location>
    <ligand>
        <name>carbamoyl phosphate</name>
        <dbReference type="ChEBI" id="CHEBI:58228"/>
    </ligand>
</feature>
<feature type="binding site" evidence="1">
    <location>
        <position position="142"/>
    </location>
    <ligand>
        <name>carbamoyl phosphate</name>
        <dbReference type="ChEBI" id="CHEBI:58228"/>
    </ligand>
</feature>
<feature type="binding site" evidence="1">
    <location>
        <position position="145"/>
    </location>
    <ligand>
        <name>carbamoyl phosphate</name>
        <dbReference type="ChEBI" id="CHEBI:58228"/>
    </ligand>
</feature>
<feature type="binding site" evidence="1">
    <location>
        <position position="182"/>
    </location>
    <ligand>
        <name>L-aspartate</name>
        <dbReference type="ChEBI" id="CHEBI:29991"/>
    </ligand>
</feature>
<feature type="binding site" evidence="1">
    <location>
        <position position="253"/>
    </location>
    <ligand>
        <name>L-aspartate</name>
        <dbReference type="ChEBI" id="CHEBI:29991"/>
    </ligand>
</feature>
<feature type="binding site" evidence="1">
    <location>
        <position position="294"/>
    </location>
    <ligand>
        <name>carbamoyl phosphate</name>
        <dbReference type="ChEBI" id="CHEBI:58228"/>
    </ligand>
</feature>
<feature type="binding site" evidence="1">
    <location>
        <position position="295"/>
    </location>
    <ligand>
        <name>carbamoyl phosphate</name>
        <dbReference type="ChEBI" id="CHEBI:58228"/>
    </ligand>
</feature>
<evidence type="ECO:0000255" key="1">
    <source>
        <dbReference type="HAMAP-Rule" id="MF_00001"/>
    </source>
</evidence>
<sequence length="338" mass="37168">MGNWPHKHILTLSNFSIDDYESVIELTERFKSLNNAGTKKIPALQGKLITSIFFEASTRTRNSFELAAKRLSADVQSFSPSSSSLSKGETLIDTALTYAAMGSDILVIRHSSSHVPLEISKKLDASKAKTSVLNAGDGLHSHPSQGLLDLYTLIKFFSPKLLKPEILNSKKILIVGDVIHSRVARSNLWALTAFGANIILCGPPTLIPEEFTDFVSSSPPNQLRDPISSRGSITISSSLEESIKCADAVIVLRLQKERMIENLLSSIKSYSENYCLTPEKLSLNCKDIPILHPGPINRGIEISSRVVDEYPNCLINDQVSNGIPTRMALLYLLSKFNN</sequence>
<name>PYRB_PROMP</name>
<reference key="1">
    <citation type="journal article" date="2003" name="Nature">
        <title>Genome divergence in two Prochlorococcus ecotypes reflects oceanic niche differentiation.</title>
        <authorList>
            <person name="Rocap G."/>
            <person name="Larimer F.W."/>
            <person name="Lamerdin J.E."/>
            <person name="Malfatti S."/>
            <person name="Chain P."/>
            <person name="Ahlgren N.A."/>
            <person name="Arellano A."/>
            <person name="Coleman M."/>
            <person name="Hauser L."/>
            <person name="Hess W.R."/>
            <person name="Johnson Z.I."/>
            <person name="Land M.L."/>
            <person name="Lindell D."/>
            <person name="Post A.F."/>
            <person name="Regala W."/>
            <person name="Shah M."/>
            <person name="Shaw S.L."/>
            <person name="Steglich C."/>
            <person name="Sullivan M.B."/>
            <person name="Ting C.S."/>
            <person name="Tolonen A."/>
            <person name="Webb E.A."/>
            <person name="Zinser E.R."/>
            <person name="Chisholm S.W."/>
        </authorList>
    </citation>
    <scope>NUCLEOTIDE SEQUENCE [LARGE SCALE GENOMIC DNA]</scope>
    <source>
        <strain>CCMP1986 / NIES-2087 / MED4</strain>
    </source>
</reference>
<keyword id="KW-0665">Pyrimidine biosynthesis</keyword>
<keyword id="KW-0808">Transferase</keyword>
<comment type="function">
    <text evidence="1">Catalyzes the condensation of carbamoyl phosphate and aspartate to form carbamoyl aspartate and inorganic phosphate, the committed step in the de novo pyrimidine nucleotide biosynthesis pathway.</text>
</comment>
<comment type="catalytic activity">
    <reaction evidence="1">
        <text>carbamoyl phosphate + L-aspartate = N-carbamoyl-L-aspartate + phosphate + H(+)</text>
        <dbReference type="Rhea" id="RHEA:20013"/>
        <dbReference type="ChEBI" id="CHEBI:15378"/>
        <dbReference type="ChEBI" id="CHEBI:29991"/>
        <dbReference type="ChEBI" id="CHEBI:32814"/>
        <dbReference type="ChEBI" id="CHEBI:43474"/>
        <dbReference type="ChEBI" id="CHEBI:58228"/>
        <dbReference type="EC" id="2.1.3.2"/>
    </reaction>
</comment>
<comment type="pathway">
    <text evidence="1">Pyrimidine metabolism; UMP biosynthesis via de novo pathway; (S)-dihydroorotate from bicarbonate: step 2/3.</text>
</comment>
<comment type="subunit">
    <text evidence="1">Heterododecamer (2C3:3R2) of six catalytic PyrB chains organized as two trimers (C3), and six regulatory PyrI chains organized as three dimers (R2).</text>
</comment>
<comment type="similarity">
    <text evidence="1">Belongs to the aspartate/ornithine carbamoyltransferase superfamily. ATCase family.</text>
</comment>
<protein>
    <recommendedName>
        <fullName evidence="1">Aspartate carbamoyltransferase catalytic subunit</fullName>
        <ecNumber evidence="1">2.1.3.2</ecNumber>
    </recommendedName>
    <alternativeName>
        <fullName evidence="1">Aspartate transcarbamylase</fullName>
        <shortName evidence="1">ATCase</shortName>
    </alternativeName>
</protein>
<organism>
    <name type="scientific">Prochlorococcus marinus subsp. pastoris (strain CCMP1986 / NIES-2087 / MED4)</name>
    <dbReference type="NCBI Taxonomy" id="59919"/>
    <lineage>
        <taxon>Bacteria</taxon>
        <taxon>Bacillati</taxon>
        <taxon>Cyanobacteriota</taxon>
        <taxon>Cyanophyceae</taxon>
        <taxon>Synechococcales</taxon>
        <taxon>Prochlorococcaceae</taxon>
        <taxon>Prochlorococcus</taxon>
    </lineage>
</organism>